<accession>Q5NUL3</accession>
<accession>Q495H1</accession>
<accession>Q5VY25</accession>
<accession>Q5VY26</accession>
<accession>Q7Z605</accession>
<accession>Q86SM7</accession>
<reference key="1">
    <citation type="journal article" date="2003" name="FEBS Lett.">
        <title>Seven evolutionarily conserved human rhodopsin G protein-coupled receptors lacking close relatives.</title>
        <authorList>
            <person name="Fredriksson R."/>
            <person name="Hoeglund P.J."/>
            <person name="Gloriam D.E.I."/>
            <person name="Lagerstroem M.C."/>
            <person name="Schioeth H.B."/>
        </authorList>
    </citation>
    <scope>NUCLEOTIDE SEQUENCE [MRNA] (ISOFORM 1)</scope>
</reference>
<reference key="2">
    <citation type="journal article" date="2005" name="Nat. Med.">
        <title>Free fatty acids regulate gut incretin glucagon-like peptide-1 secretion through GPR120.</title>
        <authorList>
            <person name="Hirasawa A."/>
            <person name="Tsumaya K."/>
            <person name="Awaji T."/>
            <person name="Katsuma S."/>
            <person name="Adachi T."/>
            <person name="Yamada M."/>
            <person name="Sugimoto Y."/>
            <person name="Miyazaki S."/>
            <person name="Tsujimoto G."/>
        </authorList>
    </citation>
    <scope>NUCLEOTIDE SEQUENCE [MRNA] (ISOFORM 1)</scope>
    <scope>FUNCTION</scope>
    <scope>TISSUE SPECIFICITY</scope>
    <scope>VARIANT CYS-67</scope>
</reference>
<reference key="3">
    <citation type="journal article" date="2004" name="Nature">
        <title>The DNA sequence and comparative analysis of human chromosome 10.</title>
        <authorList>
            <person name="Deloukas P."/>
            <person name="Earthrowl M.E."/>
            <person name="Grafham D.V."/>
            <person name="Rubenfield M."/>
            <person name="French L."/>
            <person name="Steward C.A."/>
            <person name="Sims S.K."/>
            <person name="Jones M.C."/>
            <person name="Searle S."/>
            <person name="Scott C."/>
            <person name="Howe K."/>
            <person name="Hunt S.E."/>
            <person name="Andrews T.D."/>
            <person name="Gilbert J.G.R."/>
            <person name="Swarbreck D."/>
            <person name="Ashurst J.L."/>
            <person name="Taylor A."/>
            <person name="Battles J."/>
            <person name="Bird C.P."/>
            <person name="Ainscough R."/>
            <person name="Almeida J.P."/>
            <person name="Ashwell R.I.S."/>
            <person name="Ambrose K.D."/>
            <person name="Babbage A.K."/>
            <person name="Bagguley C.L."/>
            <person name="Bailey J."/>
            <person name="Banerjee R."/>
            <person name="Bates K."/>
            <person name="Beasley H."/>
            <person name="Bray-Allen S."/>
            <person name="Brown A.J."/>
            <person name="Brown J.Y."/>
            <person name="Burford D.C."/>
            <person name="Burrill W."/>
            <person name="Burton J."/>
            <person name="Cahill P."/>
            <person name="Camire D."/>
            <person name="Carter N.P."/>
            <person name="Chapman J.C."/>
            <person name="Clark S.Y."/>
            <person name="Clarke G."/>
            <person name="Clee C.M."/>
            <person name="Clegg S."/>
            <person name="Corby N."/>
            <person name="Coulson A."/>
            <person name="Dhami P."/>
            <person name="Dutta I."/>
            <person name="Dunn M."/>
            <person name="Faulkner L."/>
            <person name="Frankish A."/>
            <person name="Frankland J.A."/>
            <person name="Garner P."/>
            <person name="Garnett J."/>
            <person name="Gribble S."/>
            <person name="Griffiths C."/>
            <person name="Grocock R."/>
            <person name="Gustafson E."/>
            <person name="Hammond S."/>
            <person name="Harley J.L."/>
            <person name="Hart E."/>
            <person name="Heath P.D."/>
            <person name="Ho T.P."/>
            <person name="Hopkins B."/>
            <person name="Horne J."/>
            <person name="Howden P.J."/>
            <person name="Huckle E."/>
            <person name="Hynds C."/>
            <person name="Johnson C."/>
            <person name="Johnson D."/>
            <person name="Kana A."/>
            <person name="Kay M."/>
            <person name="Kimberley A.M."/>
            <person name="Kershaw J.K."/>
            <person name="Kokkinaki M."/>
            <person name="Laird G.K."/>
            <person name="Lawlor S."/>
            <person name="Lee H.M."/>
            <person name="Leongamornlert D.A."/>
            <person name="Laird G."/>
            <person name="Lloyd C."/>
            <person name="Lloyd D.M."/>
            <person name="Loveland J."/>
            <person name="Lovell J."/>
            <person name="McLaren S."/>
            <person name="McLay K.E."/>
            <person name="McMurray A."/>
            <person name="Mashreghi-Mohammadi M."/>
            <person name="Matthews L."/>
            <person name="Milne S."/>
            <person name="Nickerson T."/>
            <person name="Nguyen M."/>
            <person name="Overton-Larty E."/>
            <person name="Palmer S.A."/>
            <person name="Pearce A.V."/>
            <person name="Peck A.I."/>
            <person name="Pelan S."/>
            <person name="Phillimore B."/>
            <person name="Porter K."/>
            <person name="Rice C.M."/>
            <person name="Rogosin A."/>
            <person name="Ross M.T."/>
            <person name="Sarafidou T."/>
            <person name="Sehra H.K."/>
            <person name="Shownkeen R."/>
            <person name="Skuce C.D."/>
            <person name="Smith M."/>
            <person name="Standring L."/>
            <person name="Sycamore N."/>
            <person name="Tester J."/>
            <person name="Thorpe A."/>
            <person name="Torcasso W."/>
            <person name="Tracey A."/>
            <person name="Tromans A."/>
            <person name="Tsolas J."/>
            <person name="Wall M."/>
            <person name="Walsh J."/>
            <person name="Wang H."/>
            <person name="Weinstock K."/>
            <person name="West A.P."/>
            <person name="Willey D.L."/>
            <person name="Whitehead S.L."/>
            <person name="Wilming L."/>
            <person name="Wray P.W."/>
            <person name="Young L."/>
            <person name="Chen Y."/>
            <person name="Lovering R.C."/>
            <person name="Moschonas N.K."/>
            <person name="Siebert R."/>
            <person name="Fechtel K."/>
            <person name="Bentley D."/>
            <person name="Durbin R.M."/>
            <person name="Hubbard T."/>
            <person name="Doucette-Stamm L."/>
            <person name="Beck S."/>
            <person name="Smith D.R."/>
            <person name="Rogers J."/>
        </authorList>
    </citation>
    <scope>NUCLEOTIDE SEQUENCE [LARGE SCALE GENOMIC DNA]</scope>
</reference>
<reference key="4">
    <citation type="submission" date="2005-09" db="EMBL/GenBank/DDBJ databases">
        <authorList>
            <person name="Mural R.J."/>
            <person name="Istrail S."/>
            <person name="Sutton G.G."/>
            <person name="Florea L."/>
            <person name="Halpern A.L."/>
            <person name="Mobarry C.M."/>
            <person name="Lippert R."/>
            <person name="Walenz B."/>
            <person name="Shatkay H."/>
            <person name="Dew I."/>
            <person name="Miller J.R."/>
            <person name="Flanigan M.J."/>
            <person name="Edwards N.J."/>
            <person name="Bolanos R."/>
            <person name="Fasulo D."/>
            <person name="Halldorsson B.V."/>
            <person name="Hannenhalli S."/>
            <person name="Turner R."/>
            <person name="Yooseph S."/>
            <person name="Lu F."/>
            <person name="Nusskern D.R."/>
            <person name="Shue B.C."/>
            <person name="Zheng X.H."/>
            <person name="Zhong F."/>
            <person name="Delcher A.L."/>
            <person name="Huson D.H."/>
            <person name="Kravitz S.A."/>
            <person name="Mouchard L."/>
            <person name="Reinert K."/>
            <person name="Remington K.A."/>
            <person name="Clark A.G."/>
            <person name="Waterman M.S."/>
            <person name="Eichler E.E."/>
            <person name="Adams M.D."/>
            <person name="Hunkapiller M.W."/>
            <person name="Myers E.W."/>
            <person name="Venter J.C."/>
        </authorList>
    </citation>
    <scope>NUCLEOTIDE SEQUENCE [LARGE SCALE GENOMIC DNA]</scope>
</reference>
<reference key="5">
    <citation type="journal article" date="2004" name="Genome Res.">
        <title>The status, quality, and expansion of the NIH full-length cDNA project: the Mammalian Gene Collection (MGC).</title>
        <authorList>
            <consortium name="The MGC Project Team"/>
        </authorList>
    </citation>
    <scope>NUCLEOTIDE SEQUENCE [LARGE SCALE MRNA] (ISOFORM 2)</scope>
</reference>
<reference key="6">
    <citation type="journal article" date="2003" name="Proc. Natl. Acad. Sci. U.S.A.">
        <title>The G protein-coupled receptor repertoires of human and mouse.</title>
        <authorList>
            <person name="Vassilatis D.K."/>
            <person name="Hohmann J.G."/>
            <person name="Zeng H."/>
            <person name="Li F."/>
            <person name="Ranchalis J.E."/>
            <person name="Mortrud M.T."/>
            <person name="Brown A."/>
            <person name="Rodriguez S.S."/>
            <person name="Weller J.R."/>
            <person name="Wright A.C."/>
            <person name="Bergmann J.E."/>
            <person name="Gaitanaris G.A."/>
        </authorList>
    </citation>
    <scope>NUCLEOTIDE SEQUENCE [LARGE SCALE MRNA] OF 49-312 (ISOFORM 2)</scope>
</reference>
<reference key="7">
    <citation type="journal article" date="2010" name="Biochem. Biophys. Res. Commun.">
        <title>Agonism with the omega-3 fatty acids alpha-linolenic acid and docosahexaenoic acid mediates phosphorylation of both the short and long isoforms of the human GPR120 receptor.</title>
        <authorList>
            <person name="Burns R.N."/>
            <person name="Moniri N.H."/>
        </authorList>
    </citation>
    <scope>PHOSPHORYLATION</scope>
</reference>
<reference key="8">
    <citation type="journal article" date="2012" name="Mol. Pharmacol.">
        <title>Differential signaling by splice variants of the human free fatty acid receptor GPR120.</title>
        <authorList>
            <person name="Watson S.J."/>
            <person name="Brown A.J."/>
            <person name="Holliday N.D."/>
        </authorList>
    </citation>
    <scope>FUNCTION (ISOFORMS 1 AND 2)</scope>
    <scope>SUBCELLULAR LOCATION (ISOFORMS 1 AND 2)</scope>
    <scope>INTERACTION WITH ARRB2 (ISOFORMS 1 AND 2)</scope>
    <scope>MUTAGENESIS OF ARG-99 AND ARG-178</scope>
</reference>
<reference key="9">
    <citation type="journal article" date="2013" name="Immunity">
        <title>Omega-3 fatty acids prevent inflammation and metabolic disorder through inhibition of NLRP3 inflammasome activation.</title>
        <authorList>
            <person name="Yan Y."/>
            <person name="Jiang W."/>
            <person name="Spinetti T."/>
            <person name="Tardivel A."/>
            <person name="Castillo R."/>
            <person name="Bourquin C."/>
            <person name="Guarda G."/>
            <person name="Tian Z."/>
            <person name="Tschopp J."/>
            <person name="Zhou R."/>
        </authorList>
    </citation>
    <scope>FUNCTION</scope>
</reference>
<reference key="10">
    <citation type="journal article" date="2014" name="J. Biol. Chem.">
        <title>Alteration of the glucagon axis in GPR120 (FFAR4) knockout mice: a role for GPR120 in glucagon secretion.</title>
        <authorList>
            <person name="Suckow A.T."/>
            <person name="Polidori D."/>
            <person name="Yan W."/>
            <person name="Chon S."/>
            <person name="Ma J.Y."/>
            <person name="Leonard J."/>
            <person name="Briscoe C.P."/>
        </authorList>
    </citation>
    <scope>FUNCTION (ISOFORM 2)</scope>
    <scope>TISSUE SPECIFICITY (ISOFORM 2)</scope>
</reference>
<reference key="11">
    <citation type="journal article" date="2014" name="J. Biol. Chem.">
        <title>Concomitant action of structural elements and receptor phosphorylation determines arrestin-3 interaction with the free fatty acid receptor FFA4.</title>
        <authorList>
            <person name="Butcher A.J."/>
            <person name="Hudson B.D."/>
            <person name="Shimpukade B."/>
            <person name="Alvarez-Curto E."/>
            <person name="Prihandoko R."/>
            <person name="Ulven T."/>
            <person name="Milligan G."/>
            <person name="Tobin A.B."/>
        </authorList>
    </citation>
    <scope>FUNCTION (ISOFORM 2)</scope>
    <scope>INTERACTION WITH ARRB2 (ISOFORM 2)</scope>
    <scope>PHOSPHORYLATION AT THR-347; THR-349; SER-350; SER-357 AND SER-360</scope>
    <scope>MUTAGENESIS OF 347-THR--SER-360</scope>
</reference>
<reference key="12">
    <citation type="journal article" date="2016" name="J. Biol. Chem.">
        <title>Targeted Elimination of G Proteins and Arrestins Defines Their Specific Contributions to Both Intensity and Duration of G Protein-coupled Receptor Signaling.</title>
        <authorList>
            <person name="Alvarez-Curto E."/>
            <person name="Inoue A."/>
            <person name="Jenkins L."/>
            <person name="Raihan S.Z."/>
            <person name="Prihandoko R."/>
            <person name="Tobin A.B."/>
            <person name="Milligan G."/>
        </authorList>
    </citation>
    <scope>FUNCTION (ISOFORM 2)</scope>
</reference>
<reference key="13">
    <citation type="journal article" date="2019" name="Cell">
        <title>Omega-3 Fatty Acids Activate Ciliary FFAR4 to Control Adipogenesis.</title>
        <authorList>
            <person name="Hilgendorf K.I."/>
            <person name="Johnson C.T."/>
            <person name="Mezger A."/>
            <person name="Rice S.L."/>
            <person name="Norris A.M."/>
            <person name="Demeter J."/>
            <person name="Greenleaf W.J."/>
            <person name="Reiter J.F."/>
            <person name="Kopinke D."/>
            <person name="Jackson P.K."/>
        </authorList>
    </citation>
    <scope>SUBCELLULAR LOCATION</scope>
    <scope>TISSUE SPECIFICITY</scope>
</reference>
<reference key="14">
    <citation type="journal article" date="2012" name="Nature">
        <title>Dysfunction of lipid sensor GPR120 leads to obesity in both mouse and human.</title>
        <authorList>
            <person name="Ichimura A."/>
            <person name="Hirasawa A."/>
            <person name="Poulain-Godefroy O."/>
            <person name="Bonnefond A."/>
            <person name="Hara T."/>
            <person name="Yengo L."/>
            <person name="Kimura I."/>
            <person name="Leloire A."/>
            <person name="Liu N."/>
            <person name="Iida K."/>
            <person name="Choquet H."/>
            <person name="Besnard P."/>
            <person name="Lecoeur C."/>
            <person name="Vivequin S."/>
            <person name="Ayukawa K."/>
            <person name="Takeuchi M."/>
            <person name="Ozawa K."/>
            <person name="Tauber M."/>
            <person name="Maffeis C."/>
            <person name="Morandi A."/>
            <person name="Buzzetti R."/>
            <person name="Elliott P."/>
            <person name="Pouta A."/>
            <person name="Jarvelin M.R."/>
            <person name="Korner A."/>
            <person name="Kiess W."/>
            <person name="Pigeyre M."/>
            <person name="Caiazzo R."/>
            <person name="Van Hul W."/>
            <person name="Van Gaal L."/>
            <person name="Horber F."/>
            <person name="Balkau B."/>
            <person name="Levy-Marchal C."/>
            <person name="Rouskas K."/>
            <person name="Kouvatsi A."/>
            <person name="Hebebrand J."/>
            <person name="Hinney A."/>
            <person name="Scherag A."/>
            <person name="Pattou F."/>
            <person name="Meyre D."/>
            <person name="Koshimizu T.A."/>
            <person name="Wolowczuk I."/>
            <person name="Tsujimoto G."/>
            <person name="Froguel P."/>
        </authorList>
    </citation>
    <scope>INVOLVEMENT IN BMIQ10</scope>
    <scope>VARIANTS CYS-67 AND HIS-254</scope>
    <scope>ASSOCIATION OF VARIANT HIS-254 WITH RISK OF OBESITY</scope>
    <scope>FUNCTION</scope>
</reference>
<comment type="function">
    <molecule>Isoform 2</molecule>
    <text evidence="1 8 9 10 11 12 13">G-protein-coupled receptor for long-chain fatty acids (LCFAs) with a major role in adipogenesis, energy metabolism and inflammation. Signals via G-protein and beta-arrestin pathways (PubMed:22282525, PubMed:22343897, PubMed:24742677, PubMed:24817122, PubMed:27852822). LCFAs sensing initiates activation of phosphoinositidase C-linked G proteins GNAQ and GNA11 (G(q)/G(11)), inducing a variety of cellular responses via second messenger pathways such as intracellular calcium mobilization, modulation of cyclic adenosine monophosphate (cAMP) production, and mitogen-activated protein kinases (MAPKs) (PubMed:22282525, PubMed:22343897, PubMed:24742677, PubMed:27852822). After LCFAs binding, associates with beta-arrestin ARRB2 that acts as an adapter protein coupling the receptor to specific downstream signaling pathways, as well as mediating receptor endocytosis (PubMed:22282525, PubMed:24817122). In response to dietary fats, plays an important role in the regulation of adipocyte proliferation and differentiation (By similarity). Acts as a receptor for omega-3 polyunsaturated fatty acids (PUFAs) at primary cilium of perivascular preadipocytes, initiating an adipogenic program via cAMP and CTCF-dependent chromatin remodeling that ultimately results in transcriptional activation of adipogenic genes and cell cycle entry (By similarity). Induces differentiation of brown adipocytes probably via autocrine and endocrine functions of FGF21 hormone (By similarity). Activates brown adipocytes by initiating intracellular calcium signaling that leads to mitochondrial depolarization and fission, and overall increased mitochondrial respiration (By similarity). Consequently stimulates fatty acid uptake and oxidation in mitochondria together with UCP1-mediated thermogenic respiration, eventually reducing fat mass (By similarity). Regulates bi-potential differentiation of bone marrow mesenchymal stem cells toward osteoblasts or adipocytes likely by up-regulating distinct integrins (By similarity). In response to dietary fats regulates hormone secretion and appetite (By similarity). Stimulates GIP and GLP1 secretion from enteroendocrine cells as well as GCG secretion in pancreatic alpha cells, thereby playing a role in the regulation of blood glucose levels (By similarity). Negatively regulates glucose-induced SST secretion in pancreatic delta cells (By similarity). Mediates LCFAs inhibition of GHRL secretion, an appetite-controlling hormone (By similarity). In taste buds, contributes to sensing of dietary fatty acids by the gustatory system (By similarity). During the inflammatory response, promotes anti-inflammatory M2 macrophage differentiation in adipose tissue (By similarity). Mediates the anti-inflammatory effects of omega-3 PUFAs via inhibition of NLRP3 inflammasome activation (PubMed:23809162). In this pathway, interacts with adapter protein ARRB2 and inhibits the priming step triggered by Toll-like receptors (TLRs) at the level of TAK1 and TAB1 (By similarity). Further inhibits the activation step when ARRB2 directly associates with NLRP3, leading to inhibition of pro-inflammatory cytokine release (PubMed:23809162). Mediates LCFAs anti-apoptotic effects (By similarity).</text>
</comment>
<comment type="function">
    <molecule>Isoform 1</molecule>
    <text evidence="8">Receptor for LCFAs decoupled from G-protein signaling. May signal through beta-arrestin pathway. After LCFAs binding, associates with beta-arrestin ARRB2 that may act as an adapter protein coupling the receptor to specific downstream signaling pathways, as well as mediating receptor endocytosis.</text>
</comment>
<comment type="subunit">
    <molecule>Isoform 1</molecule>
    <text evidence="8">Interacts (via C-terminus) with ARRB2 following LCFAs stimulation.</text>
</comment>
<comment type="subunit">
    <molecule>Isoform 2</molecule>
    <text evidence="8 12">Interacts (via C-terminus) with ARRB2 following LCFAs stimulation.</text>
</comment>
<comment type="subcellular location">
    <molecule>Isoform 1</molecule>
    <subcellularLocation>
        <location evidence="8">Cell membrane</location>
        <topology evidence="2">Multi-pass membrane protein</topology>
    </subcellularLocation>
    <subcellularLocation>
        <location evidence="8">Endosome membrane</location>
        <topology evidence="2">Multi-pass membrane protein</topology>
    </subcellularLocation>
    <subcellularLocation>
        <location evidence="8">Lysosome membrane</location>
        <topology evidence="2">Multi-pass membrane protein</topology>
    </subcellularLocation>
    <text evidence="8">Sorted to late endosome/lysosome compartments upon internalization.</text>
</comment>
<comment type="subcellular location">
    <molecule>Isoform 2</molecule>
    <subcellularLocation>
        <location evidence="8">Cell membrane</location>
        <topology evidence="2">Multi-pass membrane protein</topology>
    </subcellularLocation>
    <subcellularLocation>
        <location evidence="8">Endosome membrane</location>
        <topology evidence="2">Multi-pass membrane protein</topology>
    </subcellularLocation>
    <subcellularLocation>
        <location evidence="8">Lysosome membrane</location>
        <topology evidence="2">Multi-pass membrane protein</topology>
    </subcellularLocation>
    <subcellularLocation>
        <location evidence="18">Cell projection</location>
        <location evidence="18">Cilium membrane</location>
        <topology evidence="2">Multi-pass membrane protein</topology>
    </subcellularLocation>
    <text evidence="8 18">Sorted to late endosome/lysosome compartments upon internalization (PubMed:22282525). Specifically localizes to the primary cilium of undifferentiated adipocytes. Ciliary trafficking is TULP3-dependent. As the cilium is lost during adipogenesis, moves to the plasma membrane (Probable).</text>
</comment>
<comment type="alternative products">
    <event type="alternative splicing"/>
    <isoform>
        <id>Q5NUL3-2</id>
        <name>2</name>
        <sequence type="displayed"/>
    </isoform>
    <isoform>
        <id>Q5NUL3-1</id>
        <name>1</name>
        <sequence type="described" ref="VSP_060543"/>
    </isoform>
</comment>
<comment type="tissue specificity">
    <molecule>Isoform 2</molecule>
    <text evidence="11 14">The predominant isoform in human tissues. Expressed in adipose tissue, pancreatic islets, lung and brain. Expressed in alpha cells of pancreatic islets (PubMed:24742677). Expressed in primary cilia of perivascular preadipocytes of white adipose tissue (at protein level) (PubMed:31761534).</text>
</comment>
<comment type="tissue specificity">
    <text evidence="6">Abundant expression in the intestinal tract. Expressed in colonic intraepithelial neuroendocrine cells.</text>
</comment>
<comment type="developmental stage">
    <molecule>Isoform 2</molecule>
    <text evidence="18">Low expression is detected in preadipocytes, mainly localized in primary cilium.</text>
</comment>
<comment type="PTM">
    <text evidence="7 12">Phosphorylated at two clusters of Ser and Thr residues located in the intracellular C-terminus, a prerequisite for FFAR4 internalization via an ARRB2-dependent pathway.</text>
</comment>
<comment type="polymorphism">
    <text evidence="9">Genetic variations in FFAR4 define the body mass index quantitative trait locus 10 (BMIQ10) [MIM:607514]. Variance in body mass index is a susceptibility factor for obesity.</text>
</comment>
<comment type="similarity">
    <text evidence="3">Belongs to the G-protein coupled receptor 1 family.</text>
</comment>
<evidence type="ECO:0000250" key="1">
    <source>
        <dbReference type="UniProtKB" id="Q7TMA4"/>
    </source>
</evidence>
<evidence type="ECO:0000255" key="2"/>
<evidence type="ECO:0000255" key="3">
    <source>
        <dbReference type="PROSITE-ProRule" id="PRU00521"/>
    </source>
</evidence>
<evidence type="ECO:0000269" key="4">
    <source>
    </source>
</evidence>
<evidence type="ECO:0000269" key="5">
    <source>
    </source>
</evidence>
<evidence type="ECO:0000269" key="6">
    <source>
    </source>
</evidence>
<evidence type="ECO:0000269" key="7">
    <source>
    </source>
</evidence>
<evidence type="ECO:0000269" key="8">
    <source>
    </source>
</evidence>
<evidence type="ECO:0000269" key="9">
    <source>
    </source>
</evidence>
<evidence type="ECO:0000269" key="10">
    <source>
    </source>
</evidence>
<evidence type="ECO:0000269" key="11">
    <source>
    </source>
</evidence>
<evidence type="ECO:0000269" key="12">
    <source>
    </source>
</evidence>
<evidence type="ECO:0000269" key="13">
    <source>
    </source>
</evidence>
<evidence type="ECO:0000269" key="14">
    <source>
    </source>
</evidence>
<evidence type="ECO:0000303" key="15">
    <source>
    </source>
</evidence>
<evidence type="ECO:0000305" key="16"/>
<evidence type="ECO:0000305" key="17">
    <source>
    </source>
</evidence>
<evidence type="ECO:0000305" key="18">
    <source>
    </source>
</evidence>
<evidence type="ECO:0000312" key="19">
    <source>
        <dbReference type="HGNC" id="HGNC:19061"/>
    </source>
</evidence>
<evidence type="ECO:0007829" key="20">
    <source>
        <dbReference type="PDB" id="8G59"/>
    </source>
</evidence>
<evidence type="ECO:0007829" key="21">
    <source>
        <dbReference type="PDB" id="8H4K"/>
    </source>
</evidence>
<evidence type="ECO:0007829" key="22">
    <source>
        <dbReference type="PDB" id="8ID6"/>
    </source>
</evidence>
<evidence type="ECO:0007829" key="23">
    <source>
        <dbReference type="PDB" id="8T3O"/>
    </source>
</evidence>
<feature type="chain" id="PRO_0000069610" description="Free fatty acid receptor 4">
    <location>
        <begin position="1"/>
        <end position="361"/>
    </location>
</feature>
<feature type="topological domain" description="Extracellular" evidence="2">
    <location>
        <begin position="1"/>
        <end position="45"/>
    </location>
</feature>
<feature type="transmembrane region" description="Helical; Name=1" evidence="2">
    <location>
        <begin position="46"/>
        <end position="66"/>
    </location>
</feature>
<feature type="topological domain" description="Cytoplasmic" evidence="2">
    <location>
        <begin position="67"/>
        <end position="77"/>
    </location>
</feature>
<feature type="transmembrane region" description="Helical; Name=2" evidence="2">
    <location>
        <begin position="78"/>
        <end position="98"/>
    </location>
</feature>
<feature type="topological domain" description="Extracellular" evidence="2">
    <location>
        <begin position="99"/>
        <end position="112"/>
    </location>
</feature>
<feature type="transmembrane region" description="Helical; Name=3" evidence="2">
    <location>
        <begin position="113"/>
        <end position="133"/>
    </location>
</feature>
<feature type="topological domain" description="Cytoplasmic" evidence="2">
    <location>
        <begin position="134"/>
        <end position="156"/>
    </location>
</feature>
<feature type="transmembrane region" description="Helical; Name=4" evidence="2">
    <location>
        <begin position="157"/>
        <end position="177"/>
    </location>
</feature>
<feature type="topological domain" description="Extracellular" evidence="2">
    <location>
        <begin position="178"/>
        <end position="204"/>
    </location>
</feature>
<feature type="transmembrane region" description="Helical; Name=5" evidence="2">
    <location>
        <begin position="205"/>
        <end position="225"/>
    </location>
</feature>
<feature type="topological domain" description="Cytoplasmic" evidence="2">
    <location>
        <begin position="226"/>
        <end position="268"/>
    </location>
</feature>
<feature type="transmembrane region" description="Helical; Name=6" evidence="2">
    <location>
        <begin position="269"/>
        <end position="289"/>
    </location>
</feature>
<feature type="topological domain" description="Extracellular" evidence="2">
    <location>
        <begin position="290"/>
        <end position="295"/>
    </location>
</feature>
<feature type="transmembrane region" description="Helical; Name=7" evidence="2">
    <location>
        <begin position="296"/>
        <end position="316"/>
    </location>
</feature>
<feature type="topological domain" description="Cytoplasmic" evidence="2">
    <location>
        <begin position="317"/>
        <end position="361"/>
    </location>
</feature>
<feature type="modified residue" description="Phosphothreonine" evidence="12">
    <location>
        <position position="347"/>
    </location>
</feature>
<feature type="modified residue" description="Phosphothreonine" evidence="12">
    <location>
        <position position="349"/>
    </location>
</feature>
<feature type="modified residue" description="Phosphoserine" evidence="12">
    <location>
        <position position="350"/>
    </location>
</feature>
<feature type="modified residue" description="Phosphoserine" evidence="12">
    <location>
        <position position="357"/>
    </location>
</feature>
<feature type="modified residue" description="Phosphoserine" evidence="17">
    <location>
        <position position="360"/>
    </location>
</feature>
<feature type="glycosylation site" description="N-linked (GlcNAc...) asparagine" evidence="2">
    <location>
        <position position="21"/>
    </location>
</feature>
<feature type="disulfide bond" evidence="3">
    <location>
        <begin position="111"/>
        <end position="194"/>
    </location>
</feature>
<feature type="splice variant" id="VSP_060543" description="In isoform 1." evidence="4 5">
    <original>Q</original>
    <variation>QTSEHLLDARAVVTHSE</variation>
    <location>
        <position position="232"/>
    </location>
</feature>
<feature type="sequence variant" id="VAR_067799" description="In dbSNP:rs61866610." evidence="6 9">
    <original>R</original>
    <variation>C</variation>
    <location>
        <position position="67"/>
    </location>
</feature>
<feature type="sequence variant" id="VAR_067800" description="Probable risk factor for obesity; significantly decreases LCFA-induced intracellular calcium release; dbSNP:rs116454156." evidence="9">
    <original>R</original>
    <variation>H</variation>
    <location>
        <position position="254"/>
    </location>
</feature>
<feature type="mutagenesis site" description="Impairs LCFA-induced intracellular calcium release." evidence="8">
    <original>R</original>
    <variation>A</variation>
    <location>
        <position position="99"/>
    </location>
</feature>
<feature type="mutagenesis site" description="Has no effect on LCFA-induced intracellular calcium release." evidence="8">
    <original>R</original>
    <variation>A</variation>
    <location>
        <position position="178"/>
    </location>
</feature>
<feature type="mutagenesis site" description="Impairs LCFA-mediated phosphorylation and interaction with ARRB2." evidence="12">
    <original>TDTSVKRNDLSIIS</original>
    <variation>AAAAVKRNALAIIA</variation>
    <location>
        <begin position="347"/>
        <end position="360"/>
    </location>
</feature>
<feature type="sequence conflict" description="In Ref. 1; AAP72126." evidence="16" ref="1">
    <location>
        <position position="67"/>
    </location>
</feature>
<feature type="sequence conflict" description="In Ref. 2; BAD83368." evidence="16" ref="2">
    <original>Q</original>
    <variation>H</variation>
    <location>
        <position position="258"/>
    </location>
</feature>
<feature type="sequence conflict" description="In Ref. 2; BAD83368." evidence="16" ref="2">
    <original>I</original>
    <variation>T</variation>
    <location>
        <position position="281"/>
    </location>
</feature>
<feature type="turn" evidence="20">
    <location>
        <begin position="37"/>
        <end position="39"/>
    </location>
</feature>
<feature type="helix" evidence="20">
    <location>
        <begin position="43"/>
        <end position="69"/>
    </location>
</feature>
<feature type="strand" evidence="21">
    <location>
        <begin position="73"/>
        <end position="76"/>
    </location>
</feature>
<feature type="helix" evidence="20">
    <location>
        <begin position="78"/>
        <end position="90"/>
    </location>
</feature>
<feature type="helix" evidence="20">
    <location>
        <begin position="92"/>
        <end position="100"/>
    </location>
</feature>
<feature type="strand" evidence="20">
    <location>
        <begin position="101"/>
        <end position="103"/>
    </location>
</feature>
<feature type="helix" evidence="20">
    <location>
        <begin position="110"/>
        <end position="141"/>
    </location>
</feature>
<feature type="turn" evidence="21">
    <location>
        <begin position="143"/>
        <end position="146"/>
    </location>
</feature>
<feature type="helix" evidence="20">
    <location>
        <begin position="153"/>
        <end position="168"/>
    </location>
</feature>
<feature type="helix" evidence="20">
    <location>
        <begin position="169"/>
        <end position="171"/>
    </location>
</feature>
<feature type="helix" evidence="20">
    <location>
        <begin position="172"/>
        <end position="175"/>
    </location>
</feature>
<feature type="strand" evidence="20">
    <location>
        <begin position="176"/>
        <end position="182"/>
    </location>
</feature>
<feature type="turn" evidence="22">
    <location>
        <begin position="185"/>
        <end position="187"/>
    </location>
</feature>
<feature type="strand" evidence="20">
    <location>
        <begin position="191"/>
        <end position="196"/>
    </location>
</feature>
<feature type="helix" evidence="20">
    <location>
        <begin position="202"/>
        <end position="243"/>
    </location>
</feature>
<feature type="helix" evidence="20">
    <location>
        <begin position="249"/>
        <end position="291"/>
    </location>
</feature>
<feature type="helix" evidence="20">
    <location>
        <begin position="300"/>
        <end position="320"/>
    </location>
</feature>
<feature type="turn" evidence="23">
    <location>
        <begin position="321"/>
        <end position="325"/>
    </location>
</feature>
<sequence length="361" mass="40494">MSPECARAAGDAPLRSLEQANRTRFPFFSDVKGDHRLVLAAVETTVLVLIFAVSLLGNVCALVLVARRRRRGATACLVLNLFCADLLFISAIPLVLAVRWTEAWLLGPVACHLLFYVMTLSGSVTILTLAAVSLERMVCIVHLQRGVRGPGRRARAVLLALIWGYSAVAALPLCVFFRVVPQRLPGADQEISICTLIWPTIPGEISWDVSFVTLNFLVPGLVIVISYSKILQITKASRKRLTVSLAYSESHQIRVSQQDFRLFRTLFLLMVSFFIMWSPIIITILLILIQNFKQDLVIWPSLFFWVVAFTFANSALNPILYNMTLCRNEWKKIFCCFWFPEKGAILTDTSVKRNDLSIISG</sequence>
<organism>
    <name type="scientific">Homo sapiens</name>
    <name type="common">Human</name>
    <dbReference type="NCBI Taxonomy" id="9606"/>
    <lineage>
        <taxon>Eukaryota</taxon>
        <taxon>Metazoa</taxon>
        <taxon>Chordata</taxon>
        <taxon>Craniata</taxon>
        <taxon>Vertebrata</taxon>
        <taxon>Euteleostomi</taxon>
        <taxon>Mammalia</taxon>
        <taxon>Eutheria</taxon>
        <taxon>Euarchontoglires</taxon>
        <taxon>Primates</taxon>
        <taxon>Haplorrhini</taxon>
        <taxon>Catarrhini</taxon>
        <taxon>Hominidae</taxon>
        <taxon>Homo</taxon>
    </lineage>
</organism>
<proteinExistence type="evidence at protein level"/>
<gene>
    <name evidence="19" type="primary">FFAR4</name>
    <name evidence="15" type="synonym">GPR120</name>
    <name type="synonym">GPR129</name>
    <name type="synonym">O3FAR1</name>
    <name type="synonym">PGR4</name>
</gene>
<keyword id="KW-0002">3D-structure</keyword>
<keyword id="KW-0025">Alternative splicing</keyword>
<keyword id="KW-1003">Cell membrane</keyword>
<keyword id="KW-0966">Cell projection</keyword>
<keyword id="KW-0221">Differentiation</keyword>
<keyword id="KW-1015">Disulfide bond</keyword>
<keyword id="KW-0967">Endosome</keyword>
<keyword id="KW-0297">G-protein coupled receptor</keyword>
<keyword id="KW-0325">Glycoprotein</keyword>
<keyword id="KW-0395">Inflammatory response</keyword>
<keyword id="KW-0446">Lipid-binding</keyword>
<keyword id="KW-0458">Lysosome</keyword>
<keyword id="KW-0472">Membrane</keyword>
<keyword id="KW-0597">Phosphoprotein</keyword>
<keyword id="KW-0675">Receptor</keyword>
<keyword id="KW-1185">Reference proteome</keyword>
<keyword id="KW-0807">Transducer</keyword>
<keyword id="KW-0812">Transmembrane</keyword>
<keyword id="KW-1133">Transmembrane helix</keyword>
<name>FFAR4_HUMAN</name>
<protein>
    <recommendedName>
        <fullName>Free fatty acid receptor 4</fullName>
    </recommendedName>
    <alternativeName>
        <fullName>G-protein coupled receptor 120</fullName>
    </alternativeName>
    <alternativeName>
        <fullName>G-protein coupled receptor 129</fullName>
    </alternativeName>
    <alternativeName>
        <fullName>G-protein coupled receptor GT01</fullName>
    </alternativeName>
    <alternativeName>
        <fullName>G-protein coupled receptor PGR4</fullName>
    </alternativeName>
    <alternativeName>
        <fullName>Omega-3 fatty acid receptor 1</fullName>
    </alternativeName>
</protein>
<dbReference type="EMBL" id="AY288417">
    <property type="protein sequence ID" value="AAP72126.1"/>
    <property type="molecule type" value="mRNA"/>
</dbReference>
<dbReference type="EMBL" id="AB115768">
    <property type="protein sequence ID" value="BAD83368.1"/>
    <property type="molecule type" value="mRNA"/>
</dbReference>
<dbReference type="EMBL" id="AL356214">
    <property type="status" value="NOT_ANNOTATED_CDS"/>
    <property type="molecule type" value="Genomic_DNA"/>
</dbReference>
<dbReference type="EMBL" id="CH471066">
    <property type="protein sequence ID" value="EAW50069.1"/>
    <property type="molecule type" value="Genomic_DNA"/>
</dbReference>
<dbReference type="EMBL" id="BC101175">
    <property type="protein sequence ID" value="AAI01176.1"/>
    <property type="molecule type" value="mRNA"/>
</dbReference>
<dbReference type="EMBL" id="AY255573">
    <property type="protein sequence ID" value="AAO85085.1"/>
    <property type="molecule type" value="mRNA"/>
</dbReference>
<dbReference type="CCDS" id="CCDS31248.1">
    <molecule id="Q5NUL3-1"/>
</dbReference>
<dbReference type="CCDS" id="CCDS55720.1">
    <molecule id="Q5NUL3-2"/>
</dbReference>
<dbReference type="RefSeq" id="NP_001182684.1">
    <molecule id="Q5NUL3-2"/>
    <property type="nucleotide sequence ID" value="NM_001195755.2"/>
</dbReference>
<dbReference type="RefSeq" id="NP_859529.2">
    <molecule id="Q5NUL3-1"/>
    <property type="nucleotide sequence ID" value="NM_181745.4"/>
</dbReference>
<dbReference type="PDB" id="8G59">
    <property type="method" value="EM"/>
    <property type="resolution" value="2.64 A"/>
    <property type="chains" value="R=1-361"/>
</dbReference>
<dbReference type="PDB" id="8H4I">
    <property type="method" value="EM"/>
    <property type="resolution" value="3.06 A"/>
    <property type="chains" value="R=1-361"/>
</dbReference>
<dbReference type="PDB" id="8H4K">
    <property type="method" value="EM"/>
    <property type="resolution" value="3.10 A"/>
    <property type="chains" value="R=1-361"/>
</dbReference>
<dbReference type="PDB" id="8H4L">
    <property type="method" value="EM"/>
    <property type="resolution" value="3.07 A"/>
    <property type="chains" value="R=1-361"/>
</dbReference>
<dbReference type="PDB" id="8ID3">
    <property type="method" value="EM"/>
    <property type="resolution" value="3.10 A"/>
    <property type="chains" value="R=1-361"/>
</dbReference>
<dbReference type="PDB" id="8ID4">
    <property type="method" value="EM"/>
    <property type="resolution" value="3.10 A"/>
    <property type="chains" value="R=1-361"/>
</dbReference>
<dbReference type="PDB" id="8ID6">
    <property type="method" value="EM"/>
    <property type="resolution" value="2.80 A"/>
    <property type="chains" value="R=1-361"/>
</dbReference>
<dbReference type="PDB" id="8ID8">
    <property type="method" value="EM"/>
    <property type="resolution" value="3.00 A"/>
    <property type="chains" value="R=1-361"/>
</dbReference>
<dbReference type="PDB" id="8ID9">
    <property type="method" value="EM"/>
    <property type="resolution" value="3.00 A"/>
    <property type="chains" value="R=1-361"/>
</dbReference>
<dbReference type="PDB" id="8IYS">
    <property type="method" value="EM"/>
    <property type="resolution" value="2.95 A"/>
    <property type="chains" value="R=1-361"/>
</dbReference>
<dbReference type="PDB" id="8T3O">
    <property type="method" value="EM"/>
    <property type="resolution" value="3.06 A"/>
    <property type="chains" value="R=22-328"/>
</dbReference>
<dbReference type="PDB" id="8T3Q">
    <property type="method" value="EM"/>
    <property type="resolution" value="3.14 A"/>
    <property type="chains" value="R=22-329"/>
</dbReference>
<dbReference type="PDBsum" id="8G59"/>
<dbReference type="PDBsum" id="8H4I"/>
<dbReference type="PDBsum" id="8H4K"/>
<dbReference type="PDBsum" id="8H4L"/>
<dbReference type="PDBsum" id="8ID3"/>
<dbReference type="PDBsum" id="8ID4"/>
<dbReference type="PDBsum" id="8ID6"/>
<dbReference type="PDBsum" id="8ID8"/>
<dbReference type="PDBsum" id="8ID9"/>
<dbReference type="PDBsum" id="8IYS"/>
<dbReference type="PDBsum" id="8T3O"/>
<dbReference type="PDBsum" id="8T3Q"/>
<dbReference type="EMDB" id="EMD-29736"/>
<dbReference type="EMDB" id="EMD-34478"/>
<dbReference type="EMDB" id="EMD-34479"/>
<dbReference type="EMDB" id="EMD-34480"/>
<dbReference type="EMDB" id="EMD-35356"/>
<dbReference type="EMDB" id="EMD-35357"/>
<dbReference type="EMDB" id="EMD-35358"/>
<dbReference type="EMDB" id="EMD-35359"/>
<dbReference type="EMDB" id="EMD-35360"/>
<dbReference type="EMDB" id="EMD-35830"/>
<dbReference type="EMDB" id="EMD-41007"/>
<dbReference type="EMDB" id="EMD-41008"/>
<dbReference type="SMR" id="Q5NUL3"/>
<dbReference type="FunCoup" id="Q5NUL3">
    <property type="interactions" value="557"/>
</dbReference>
<dbReference type="IntAct" id="Q5NUL3">
    <property type="interactions" value="1"/>
</dbReference>
<dbReference type="STRING" id="9606.ENSP00000360538"/>
<dbReference type="BindingDB" id="Q5NUL3"/>
<dbReference type="ChEMBL" id="CHEMBL5339"/>
<dbReference type="DrugBank" id="DB05532">
    <property type="generic name" value="BMS-488043"/>
</dbReference>
<dbReference type="DrugBank" id="DB13961">
    <property type="generic name" value="Fish oil"/>
</dbReference>
<dbReference type="DrugBank" id="DB05793">
    <property type="generic name" value="PRO-542"/>
</dbReference>
<dbReference type="DrugCentral" id="Q5NUL3"/>
<dbReference type="GuidetoPHARMACOLOGY" id="127"/>
<dbReference type="SwissLipids" id="SLP:000001562">
    <molecule id="Q5NUL3-2"/>
</dbReference>
<dbReference type="TCDB" id="9.A.14.13.29">
    <property type="family name" value="the g-protein-coupled receptor (gpcr) family"/>
</dbReference>
<dbReference type="GlyCosmos" id="Q5NUL3">
    <property type="glycosylation" value="1 site, No reported glycans"/>
</dbReference>
<dbReference type="GlyGen" id="Q5NUL3">
    <property type="glycosylation" value="1 site"/>
</dbReference>
<dbReference type="iPTMnet" id="Q5NUL3"/>
<dbReference type="PhosphoSitePlus" id="Q5NUL3"/>
<dbReference type="SwissPalm" id="Q5NUL3"/>
<dbReference type="BioMuta" id="FFAR4"/>
<dbReference type="DMDM" id="82581671"/>
<dbReference type="jPOST" id="Q5NUL3"/>
<dbReference type="MassIVE" id="Q5NUL3"/>
<dbReference type="PaxDb" id="9606-ENSP00000360538"/>
<dbReference type="PeptideAtlas" id="Q5NUL3"/>
<dbReference type="ProteomicsDB" id="63598">
    <molecule id="Q5NUL3-1"/>
</dbReference>
<dbReference type="ProteomicsDB" id="63599">
    <molecule id="Q5NUL3-2"/>
</dbReference>
<dbReference type="Antibodypedia" id="16549">
    <property type="antibodies" value="372 antibodies from 35 providers"/>
</dbReference>
<dbReference type="DNASU" id="338557"/>
<dbReference type="Ensembl" id="ENST00000371481.9">
    <molecule id="Q5NUL3-2"/>
    <property type="protein sequence ID" value="ENSP00000360536.5"/>
    <property type="gene ID" value="ENSG00000186188.11"/>
</dbReference>
<dbReference type="Ensembl" id="ENST00000371483.8">
    <molecule id="Q5NUL3-1"/>
    <property type="protein sequence ID" value="ENSP00000360538.4"/>
    <property type="gene ID" value="ENSG00000186188.11"/>
</dbReference>
<dbReference type="GeneID" id="338557"/>
<dbReference type="KEGG" id="hsa:338557"/>
<dbReference type="MANE-Select" id="ENST00000371481.9">
    <property type="protein sequence ID" value="ENSP00000360536.5"/>
    <property type="RefSeq nucleotide sequence ID" value="NM_001195755.2"/>
    <property type="RefSeq protein sequence ID" value="NP_001182684.1"/>
</dbReference>
<dbReference type="UCSC" id="uc010qnt.2">
    <molecule id="Q5NUL3-2"/>
    <property type="organism name" value="human"/>
</dbReference>
<dbReference type="AGR" id="HGNC:19061"/>
<dbReference type="CTD" id="338557"/>
<dbReference type="DisGeNET" id="338557"/>
<dbReference type="GeneCards" id="FFAR4"/>
<dbReference type="HGNC" id="HGNC:19061">
    <property type="gene designation" value="FFAR4"/>
</dbReference>
<dbReference type="HPA" id="ENSG00000186188">
    <property type="expression patterns" value="Group enriched (adipose tissue, intestine, lung, pituitary gland)"/>
</dbReference>
<dbReference type="MalaCards" id="FFAR4"/>
<dbReference type="MIM" id="607514">
    <property type="type" value="phenotype"/>
</dbReference>
<dbReference type="MIM" id="609044">
    <property type="type" value="gene"/>
</dbReference>
<dbReference type="neXtProt" id="NX_Q5NUL3"/>
<dbReference type="OpenTargets" id="ENSG00000186188"/>
<dbReference type="PharmGKB" id="PA134924595"/>
<dbReference type="VEuPathDB" id="HostDB:ENSG00000186188"/>
<dbReference type="eggNOG" id="KOG3656">
    <property type="taxonomic scope" value="Eukaryota"/>
</dbReference>
<dbReference type="GeneTree" id="ENSGT01130000278263"/>
<dbReference type="HOGENOM" id="CLU_061487_0_0_1"/>
<dbReference type="InParanoid" id="Q5NUL3"/>
<dbReference type="OMA" id="WDVTFAT"/>
<dbReference type="OrthoDB" id="9880339at2759"/>
<dbReference type="PAN-GO" id="Q5NUL3">
    <property type="GO annotations" value="6 GO annotations based on evolutionary models"/>
</dbReference>
<dbReference type="PhylomeDB" id="Q5NUL3"/>
<dbReference type="TreeFam" id="TF336844"/>
<dbReference type="PathwayCommons" id="Q5NUL3"/>
<dbReference type="Reactome" id="R-HSA-381771">
    <property type="pathway name" value="Synthesis, secretion, and inactivation of Glucagon-like Peptide-1 (GLP-1)"/>
</dbReference>
<dbReference type="Reactome" id="R-HSA-416476">
    <property type="pathway name" value="G alpha (q) signalling events"/>
</dbReference>
<dbReference type="Reactome" id="R-HSA-444209">
    <property type="pathway name" value="Free fatty acid receptors"/>
</dbReference>
<dbReference type="SignaLink" id="Q5NUL3"/>
<dbReference type="SIGNOR" id="Q5NUL3"/>
<dbReference type="BioGRID-ORCS" id="338557">
    <property type="hits" value="17 hits in 1154 CRISPR screens"/>
</dbReference>
<dbReference type="ChiTaRS" id="FFAR4">
    <property type="organism name" value="human"/>
</dbReference>
<dbReference type="GeneWiki" id="GPR120"/>
<dbReference type="GenomeRNAi" id="338557"/>
<dbReference type="Pharos" id="Q5NUL3">
    <property type="development level" value="Tchem"/>
</dbReference>
<dbReference type="PRO" id="PR:Q5NUL3"/>
<dbReference type="Proteomes" id="UP000005640">
    <property type="component" value="Chromosome 10"/>
</dbReference>
<dbReference type="RNAct" id="Q5NUL3">
    <property type="molecule type" value="protein"/>
</dbReference>
<dbReference type="Bgee" id="ENSG00000186188">
    <property type="expression patterns" value="Expressed in mucosa of sigmoid colon and 94 other cell types or tissues"/>
</dbReference>
<dbReference type="ExpressionAtlas" id="Q5NUL3">
    <property type="expression patterns" value="baseline and differential"/>
</dbReference>
<dbReference type="GO" id="GO:0036064">
    <property type="term" value="C:ciliary basal body"/>
    <property type="evidence" value="ECO:0000314"/>
    <property type="project" value="HPA"/>
</dbReference>
<dbReference type="GO" id="GO:0060170">
    <property type="term" value="C:ciliary membrane"/>
    <property type="evidence" value="ECO:0007669"/>
    <property type="project" value="UniProtKB-SubCell"/>
</dbReference>
<dbReference type="GO" id="GO:0005929">
    <property type="term" value="C:cilium"/>
    <property type="evidence" value="ECO:0000314"/>
    <property type="project" value="UniProtKB"/>
</dbReference>
<dbReference type="GO" id="GO:0030139">
    <property type="term" value="C:endocytic vesicle"/>
    <property type="evidence" value="ECO:0007669"/>
    <property type="project" value="Ensembl"/>
</dbReference>
<dbReference type="GO" id="GO:0010008">
    <property type="term" value="C:endosome membrane"/>
    <property type="evidence" value="ECO:0000314"/>
    <property type="project" value="UniProtKB"/>
</dbReference>
<dbReference type="GO" id="GO:0043231">
    <property type="term" value="C:intracellular membrane-bounded organelle"/>
    <property type="evidence" value="ECO:0000314"/>
    <property type="project" value="HPA"/>
</dbReference>
<dbReference type="GO" id="GO:0005765">
    <property type="term" value="C:lysosomal membrane"/>
    <property type="evidence" value="ECO:0000314"/>
    <property type="project" value="UniProtKB"/>
</dbReference>
<dbReference type="GO" id="GO:0005886">
    <property type="term" value="C:plasma membrane"/>
    <property type="evidence" value="ECO:0000314"/>
    <property type="project" value="UniProtKB"/>
</dbReference>
<dbReference type="GO" id="GO:1990763">
    <property type="term" value="F:arrestin family protein binding"/>
    <property type="evidence" value="ECO:0000314"/>
    <property type="project" value="UniProtKB"/>
</dbReference>
<dbReference type="GO" id="GO:0005504">
    <property type="term" value="F:fatty acid binding"/>
    <property type="evidence" value="ECO:0000250"/>
    <property type="project" value="UniProtKB"/>
</dbReference>
<dbReference type="GO" id="GO:0004930">
    <property type="term" value="F:G protein-coupled receptor activity"/>
    <property type="evidence" value="ECO:0000318"/>
    <property type="project" value="GO_Central"/>
</dbReference>
<dbReference type="GO" id="GO:0008527">
    <property type="term" value="F:taste receptor activity"/>
    <property type="evidence" value="ECO:0000318"/>
    <property type="project" value="GO_Central"/>
</dbReference>
<dbReference type="GO" id="GO:0007189">
    <property type="term" value="P:adenylate cyclase-activating G protein-coupled receptor signaling pathway"/>
    <property type="evidence" value="ECO:0000250"/>
    <property type="project" value="UniProtKB"/>
</dbReference>
<dbReference type="GO" id="GO:0050873">
    <property type="term" value="P:brown fat cell differentiation"/>
    <property type="evidence" value="ECO:0000250"/>
    <property type="project" value="UniProtKB"/>
</dbReference>
<dbReference type="GO" id="GO:0007186">
    <property type="term" value="P:G protein-coupled receptor signaling pathway"/>
    <property type="evidence" value="ECO:0000318"/>
    <property type="project" value="GO_Central"/>
</dbReference>
<dbReference type="GO" id="GO:0036321">
    <property type="term" value="P:ghrelin secretion"/>
    <property type="evidence" value="ECO:0000250"/>
    <property type="project" value="UniProtKB"/>
</dbReference>
<dbReference type="GO" id="GO:0046879">
    <property type="term" value="P:hormone secretion"/>
    <property type="evidence" value="ECO:0000318"/>
    <property type="project" value="GO_Central"/>
</dbReference>
<dbReference type="GO" id="GO:0006954">
    <property type="term" value="P:inflammatory response"/>
    <property type="evidence" value="ECO:0007669"/>
    <property type="project" value="UniProtKB-KW"/>
</dbReference>
<dbReference type="GO" id="GO:0043066">
    <property type="term" value="P:negative regulation of apoptotic process"/>
    <property type="evidence" value="ECO:0000250"/>
    <property type="project" value="UniProtKB"/>
</dbReference>
<dbReference type="GO" id="GO:0001818">
    <property type="term" value="P:negative regulation of cytokine production"/>
    <property type="evidence" value="ECO:0000250"/>
    <property type="project" value="UniProtKB"/>
</dbReference>
<dbReference type="GO" id="GO:0050728">
    <property type="term" value="P:negative regulation of inflammatory response"/>
    <property type="evidence" value="ECO:0000250"/>
    <property type="project" value="UniProtKB"/>
</dbReference>
<dbReference type="GO" id="GO:0032691">
    <property type="term" value="P:negative regulation of interleukin-1 beta production"/>
    <property type="evidence" value="ECO:0000315"/>
    <property type="project" value="UniProtKB"/>
</dbReference>
<dbReference type="GO" id="GO:0090275">
    <property type="term" value="P:negative regulation of somatostatin secretion"/>
    <property type="evidence" value="ECO:0000250"/>
    <property type="project" value="UniProtKB"/>
</dbReference>
<dbReference type="GO" id="GO:0007200">
    <property type="term" value="P:phospholipase C-activating G protein-coupled receptor signaling pathway"/>
    <property type="evidence" value="ECO:0000315"/>
    <property type="project" value="UniProtKB"/>
</dbReference>
<dbReference type="GO" id="GO:0090336">
    <property type="term" value="P:positive regulation of brown fat cell differentiation"/>
    <property type="evidence" value="ECO:0007669"/>
    <property type="project" value="Ensembl"/>
</dbReference>
<dbReference type="GO" id="GO:0120162">
    <property type="term" value="P:positive regulation of cold-induced thermogenesis"/>
    <property type="evidence" value="ECO:0000250"/>
    <property type="project" value="YuBioLab"/>
</dbReference>
<dbReference type="GO" id="GO:0007204">
    <property type="term" value="P:positive regulation of cytosolic calcium ion concentration"/>
    <property type="evidence" value="ECO:0000314"/>
    <property type="project" value="UniProtKB"/>
</dbReference>
<dbReference type="GO" id="GO:0070374">
    <property type="term" value="P:positive regulation of ERK1 and ERK2 cascade"/>
    <property type="evidence" value="ECO:0000250"/>
    <property type="project" value="UniProtKB"/>
</dbReference>
<dbReference type="GO" id="GO:0070094">
    <property type="term" value="P:positive regulation of glucagon secretion"/>
    <property type="evidence" value="ECO:0000250"/>
    <property type="project" value="UniProtKB"/>
</dbReference>
<dbReference type="GO" id="GO:0045669">
    <property type="term" value="P:positive regulation of osteoblast differentiation"/>
    <property type="evidence" value="ECO:0000250"/>
    <property type="project" value="UniProtKB"/>
</dbReference>
<dbReference type="GO" id="GO:0010827">
    <property type="term" value="P:regulation of D-glucose transmembrane transport"/>
    <property type="evidence" value="ECO:0000250"/>
    <property type="project" value="UniProtKB"/>
</dbReference>
<dbReference type="GO" id="GO:0050872">
    <property type="term" value="P:white fat cell differentiation"/>
    <property type="evidence" value="ECO:0000314"/>
    <property type="project" value="UniProtKB"/>
</dbReference>
<dbReference type="CDD" id="cd00637">
    <property type="entry name" value="7tm_classA_rhodopsin-like"/>
    <property type="match status" value="1"/>
</dbReference>
<dbReference type="FunFam" id="1.20.1070.10:FF:000170">
    <property type="entry name" value="Free fatty acid receptor 4"/>
    <property type="match status" value="1"/>
</dbReference>
<dbReference type="Gene3D" id="1.20.1070.10">
    <property type="entry name" value="Rhodopsin 7-helix transmembrane proteins"/>
    <property type="match status" value="1"/>
</dbReference>
<dbReference type="InterPro" id="IPR000276">
    <property type="entry name" value="GPCR_Rhodpsn"/>
</dbReference>
<dbReference type="InterPro" id="IPR017452">
    <property type="entry name" value="GPCR_Rhodpsn_7TM"/>
</dbReference>
<dbReference type="PANTHER" id="PTHR45695:SF37">
    <property type="entry name" value="FREE FATTY ACID RECEPTOR 4-LIKE"/>
    <property type="match status" value="1"/>
</dbReference>
<dbReference type="PANTHER" id="PTHR45695">
    <property type="entry name" value="LEUCOKININ RECEPTOR-RELATED"/>
    <property type="match status" value="1"/>
</dbReference>
<dbReference type="Pfam" id="PF00001">
    <property type="entry name" value="7tm_1"/>
    <property type="match status" value="1"/>
</dbReference>
<dbReference type="PRINTS" id="PR00237">
    <property type="entry name" value="GPCRRHODOPSN"/>
</dbReference>
<dbReference type="SUPFAM" id="SSF81321">
    <property type="entry name" value="Family A G protein-coupled receptor-like"/>
    <property type="match status" value="1"/>
</dbReference>
<dbReference type="PROSITE" id="PS50262">
    <property type="entry name" value="G_PROTEIN_RECEP_F1_2"/>
    <property type="match status" value="1"/>
</dbReference>